<dbReference type="EC" id="3.6.5.-" evidence="1"/>
<dbReference type="EMBL" id="CP001101">
    <property type="protein sequence ID" value="ACE05213.1"/>
    <property type="molecule type" value="Genomic_DNA"/>
</dbReference>
<dbReference type="SMR" id="B3EP74"/>
<dbReference type="STRING" id="331678.Cphamn1_2309"/>
<dbReference type="KEGG" id="cpb:Cphamn1_2309"/>
<dbReference type="eggNOG" id="COG0536">
    <property type="taxonomic scope" value="Bacteria"/>
</dbReference>
<dbReference type="HOGENOM" id="CLU_011747_2_3_10"/>
<dbReference type="OrthoDB" id="9807318at2"/>
<dbReference type="GO" id="GO:0005737">
    <property type="term" value="C:cytoplasm"/>
    <property type="evidence" value="ECO:0007669"/>
    <property type="project" value="UniProtKB-SubCell"/>
</dbReference>
<dbReference type="GO" id="GO:0005525">
    <property type="term" value="F:GTP binding"/>
    <property type="evidence" value="ECO:0007669"/>
    <property type="project" value="UniProtKB-UniRule"/>
</dbReference>
<dbReference type="GO" id="GO:0003924">
    <property type="term" value="F:GTPase activity"/>
    <property type="evidence" value="ECO:0007669"/>
    <property type="project" value="UniProtKB-UniRule"/>
</dbReference>
<dbReference type="GO" id="GO:0000287">
    <property type="term" value="F:magnesium ion binding"/>
    <property type="evidence" value="ECO:0007669"/>
    <property type="project" value="InterPro"/>
</dbReference>
<dbReference type="GO" id="GO:0042254">
    <property type="term" value="P:ribosome biogenesis"/>
    <property type="evidence" value="ECO:0007669"/>
    <property type="project" value="UniProtKB-UniRule"/>
</dbReference>
<dbReference type="CDD" id="cd01898">
    <property type="entry name" value="Obg"/>
    <property type="match status" value="1"/>
</dbReference>
<dbReference type="FunFam" id="2.70.210.12:FF:000001">
    <property type="entry name" value="GTPase Obg"/>
    <property type="match status" value="1"/>
</dbReference>
<dbReference type="Gene3D" id="2.70.210.12">
    <property type="entry name" value="GTP1/OBG domain"/>
    <property type="match status" value="1"/>
</dbReference>
<dbReference type="Gene3D" id="3.40.50.300">
    <property type="entry name" value="P-loop containing nucleotide triphosphate hydrolases"/>
    <property type="match status" value="1"/>
</dbReference>
<dbReference type="HAMAP" id="MF_01454">
    <property type="entry name" value="GTPase_Obg"/>
    <property type="match status" value="1"/>
</dbReference>
<dbReference type="InterPro" id="IPR031167">
    <property type="entry name" value="G_OBG"/>
</dbReference>
<dbReference type="InterPro" id="IPR006073">
    <property type="entry name" value="GTP-bd"/>
</dbReference>
<dbReference type="InterPro" id="IPR014100">
    <property type="entry name" value="GTP-bd_Obg/CgtA"/>
</dbReference>
<dbReference type="InterPro" id="IPR006074">
    <property type="entry name" value="GTP1-OBG_CS"/>
</dbReference>
<dbReference type="InterPro" id="IPR006169">
    <property type="entry name" value="GTP1_OBG_dom"/>
</dbReference>
<dbReference type="InterPro" id="IPR036726">
    <property type="entry name" value="GTP1_OBG_dom_sf"/>
</dbReference>
<dbReference type="InterPro" id="IPR045086">
    <property type="entry name" value="OBG_GTPase"/>
</dbReference>
<dbReference type="InterPro" id="IPR027417">
    <property type="entry name" value="P-loop_NTPase"/>
</dbReference>
<dbReference type="NCBIfam" id="TIGR02729">
    <property type="entry name" value="Obg_CgtA"/>
    <property type="match status" value="1"/>
</dbReference>
<dbReference type="NCBIfam" id="NF008955">
    <property type="entry name" value="PRK12297.1"/>
    <property type="match status" value="1"/>
</dbReference>
<dbReference type="NCBIfam" id="NF008956">
    <property type="entry name" value="PRK12299.1"/>
    <property type="match status" value="1"/>
</dbReference>
<dbReference type="PANTHER" id="PTHR11702">
    <property type="entry name" value="DEVELOPMENTALLY REGULATED GTP-BINDING PROTEIN-RELATED"/>
    <property type="match status" value="1"/>
</dbReference>
<dbReference type="PANTHER" id="PTHR11702:SF31">
    <property type="entry name" value="MITOCHONDRIAL RIBOSOME-ASSOCIATED GTPASE 2"/>
    <property type="match status" value="1"/>
</dbReference>
<dbReference type="Pfam" id="PF01018">
    <property type="entry name" value="GTP1_OBG"/>
    <property type="match status" value="1"/>
</dbReference>
<dbReference type="Pfam" id="PF01926">
    <property type="entry name" value="MMR_HSR1"/>
    <property type="match status" value="1"/>
</dbReference>
<dbReference type="PIRSF" id="PIRSF002401">
    <property type="entry name" value="GTP_bd_Obg/CgtA"/>
    <property type="match status" value="1"/>
</dbReference>
<dbReference type="PRINTS" id="PR00326">
    <property type="entry name" value="GTP1OBG"/>
</dbReference>
<dbReference type="SUPFAM" id="SSF82051">
    <property type="entry name" value="Obg GTP-binding protein N-terminal domain"/>
    <property type="match status" value="1"/>
</dbReference>
<dbReference type="SUPFAM" id="SSF52540">
    <property type="entry name" value="P-loop containing nucleoside triphosphate hydrolases"/>
    <property type="match status" value="1"/>
</dbReference>
<dbReference type="PROSITE" id="PS51710">
    <property type="entry name" value="G_OBG"/>
    <property type="match status" value="1"/>
</dbReference>
<dbReference type="PROSITE" id="PS00905">
    <property type="entry name" value="GTP1_OBG"/>
    <property type="match status" value="1"/>
</dbReference>
<dbReference type="PROSITE" id="PS51883">
    <property type="entry name" value="OBG"/>
    <property type="match status" value="1"/>
</dbReference>
<gene>
    <name evidence="1" type="primary">obg</name>
    <name type="ordered locus">Cphamn1_2309</name>
</gene>
<feature type="chain" id="PRO_0000385825" description="GTPase Obg">
    <location>
        <begin position="1"/>
        <end position="326"/>
    </location>
</feature>
<feature type="domain" description="Obg" evidence="2">
    <location>
        <begin position="1"/>
        <end position="159"/>
    </location>
</feature>
<feature type="domain" description="OBG-type G" evidence="1">
    <location>
        <begin position="160"/>
        <end position="323"/>
    </location>
</feature>
<feature type="region of interest" description="Disordered" evidence="3">
    <location>
        <begin position="119"/>
        <end position="138"/>
    </location>
</feature>
<feature type="binding site" evidence="1">
    <location>
        <begin position="166"/>
        <end position="173"/>
    </location>
    <ligand>
        <name>GTP</name>
        <dbReference type="ChEBI" id="CHEBI:37565"/>
    </ligand>
</feature>
<feature type="binding site" evidence="1">
    <location>
        <position position="173"/>
    </location>
    <ligand>
        <name>Mg(2+)</name>
        <dbReference type="ChEBI" id="CHEBI:18420"/>
    </ligand>
</feature>
<feature type="binding site" evidence="1">
    <location>
        <begin position="191"/>
        <end position="195"/>
    </location>
    <ligand>
        <name>GTP</name>
        <dbReference type="ChEBI" id="CHEBI:37565"/>
    </ligand>
</feature>
<feature type="binding site" evidence="1">
    <location>
        <position position="193"/>
    </location>
    <ligand>
        <name>Mg(2+)</name>
        <dbReference type="ChEBI" id="CHEBI:18420"/>
    </ligand>
</feature>
<feature type="binding site" evidence="1">
    <location>
        <begin position="213"/>
        <end position="216"/>
    </location>
    <ligand>
        <name>GTP</name>
        <dbReference type="ChEBI" id="CHEBI:37565"/>
    </ligand>
</feature>
<feature type="binding site" evidence="1">
    <location>
        <begin position="280"/>
        <end position="283"/>
    </location>
    <ligand>
        <name>GTP</name>
        <dbReference type="ChEBI" id="CHEBI:37565"/>
    </ligand>
</feature>
<feature type="binding site" evidence="1">
    <location>
        <begin position="304"/>
        <end position="306"/>
    </location>
    <ligand>
        <name>GTP</name>
        <dbReference type="ChEBI" id="CHEBI:37565"/>
    </ligand>
</feature>
<comment type="function">
    <text evidence="1">An essential GTPase which binds GTP, GDP and possibly (p)ppGpp with moderate affinity, with high nucleotide exchange rates and a fairly low GTP hydrolysis rate. Plays a role in control of the cell cycle, stress response, ribosome biogenesis and in those bacteria that undergo differentiation, in morphogenesis control.</text>
</comment>
<comment type="cofactor">
    <cofactor evidence="1">
        <name>Mg(2+)</name>
        <dbReference type="ChEBI" id="CHEBI:18420"/>
    </cofactor>
</comment>
<comment type="subunit">
    <text evidence="1">Monomer.</text>
</comment>
<comment type="subcellular location">
    <subcellularLocation>
        <location evidence="1">Cytoplasm</location>
    </subcellularLocation>
</comment>
<comment type="similarity">
    <text evidence="1">Belongs to the TRAFAC class OBG-HflX-like GTPase superfamily. OBG GTPase family.</text>
</comment>
<accession>B3EP74</accession>
<name>OBG_CHLPB</name>
<reference key="1">
    <citation type="submission" date="2008-06" db="EMBL/GenBank/DDBJ databases">
        <title>Complete sequence of Chlorobium phaeobacteroides BS1.</title>
        <authorList>
            <consortium name="US DOE Joint Genome Institute"/>
            <person name="Lucas S."/>
            <person name="Copeland A."/>
            <person name="Lapidus A."/>
            <person name="Glavina del Rio T."/>
            <person name="Dalin E."/>
            <person name="Tice H."/>
            <person name="Bruce D."/>
            <person name="Goodwin L."/>
            <person name="Pitluck S."/>
            <person name="Schmutz J."/>
            <person name="Larimer F."/>
            <person name="Land M."/>
            <person name="Hauser L."/>
            <person name="Kyrpides N."/>
            <person name="Ovchinnikova G."/>
            <person name="Li T."/>
            <person name="Liu Z."/>
            <person name="Zhao F."/>
            <person name="Overmann J."/>
            <person name="Bryant D.A."/>
            <person name="Richardson P."/>
        </authorList>
    </citation>
    <scope>NUCLEOTIDE SEQUENCE [LARGE SCALE GENOMIC DNA]</scope>
    <source>
        <strain>BS1</strain>
    </source>
</reference>
<keyword id="KW-0963">Cytoplasm</keyword>
<keyword id="KW-0342">GTP-binding</keyword>
<keyword id="KW-0378">Hydrolase</keyword>
<keyword id="KW-0460">Magnesium</keyword>
<keyword id="KW-0479">Metal-binding</keyword>
<keyword id="KW-0547">Nucleotide-binding</keyword>
<proteinExistence type="inferred from homology"/>
<evidence type="ECO:0000255" key="1">
    <source>
        <dbReference type="HAMAP-Rule" id="MF_01454"/>
    </source>
</evidence>
<evidence type="ECO:0000255" key="2">
    <source>
        <dbReference type="PROSITE-ProRule" id="PRU01231"/>
    </source>
</evidence>
<evidence type="ECO:0000256" key="3">
    <source>
        <dbReference type="SAM" id="MobiDB-lite"/>
    </source>
</evidence>
<organism>
    <name type="scientific">Chlorobium phaeobacteroides (strain BS1)</name>
    <dbReference type="NCBI Taxonomy" id="331678"/>
    <lineage>
        <taxon>Bacteria</taxon>
        <taxon>Pseudomonadati</taxon>
        <taxon>Chlorobiota</taxon>
        <taxon>Chlorobiia</taxon>
        <taxon>Chlorobiales</taxon>
        <taxon>Chlorobiaceae</taxon>
        <taxon>Chlorobium/Pelodictyon group</taxon>
        <taxon>Chlorobium</taxon>
    </lineage>
</organism>
<sequence length="326" mass="34800">MKFVDSAKIYVKGGNGGNGCMSFRREKYVPKGGPDGGDGGRGGHVYLRADGQMSTLLDFRYKKHYEAQRGVHGQGSKKNGKMGKDTVIPVPCGTVVRNAADGSLIADLTEEGEELLVAEGGKGGKGNPHFASSTRQAPRYAEPGGVGMALEIELELKLMADVGLVGFPNAGKSTLISSVSAARPKIADYPFTTLVPNLGIVQYREYSSFVMADIPGIIEGAAEGKGLGLQFLKHIERTKVLAVLIAADSEDIEAEYASLKREMERFGSGLLEKPRVVLITKMDIAPEDFSVPSFSDDAPVLMISSVTGEGIDVLKDELWSRVKSEG</sequence>
<protein>
    <recommendedName>
        <fullName evidence="1">GTPase Obg</fullName>
        <ecNumber evidence="1">3.6.5.-</ecNumber>
    </recommendedName>
    <alternativeName>
        <fullName evidence="1">GTP-binding protein Obg</fullName>
    </alternativeName>
</protein>